<dbReference type="EMBL" id="AY510286">
    <property type="protein sequence ID" value="AAR87953.1"/>
    <property type="molecule type" value="mRNA"/>
</dbReference>
<dbReference type="RefSeq" id="NP_001008915.1">
    <property type="nucleotide sequence ID" value="NM_001008915.1"/>
</dbReference>
<dbReference type="SMR" id="Q5J3M4"/>
<dbReference type="BioGRID" id="268880">
    <property type="interactions" value="1"/>
</dbReference>
<dbReference type="IntAct" id="Q5J3M4">
    <property type="interactions" value="1"/>
</dbReference>
<dbReference type="MINT" id="Q5J3M4"/>
<dbReference type="GlyCosmos" id="Q5J3M4">
    <property type="glycosylation" value="1 site, No reported glycans"/>
</dbReference>
<dbReference type="GlyGen" id="Q5J3M4">
    <property type="glycosylation" value="1 site"/>
</dbReference>
<dbReference type="PaxDb" id="10116-ENSRNOP00000047560"/>
<dbReference type="GeneID" id="494265"/>
<dbReference type="KEGG" id="rno:494265"/>
<dbReference type="UCSC" id="RGD:1359098">
    <property type="organism name" value="rat"/>
</dbReference>
<dbReference type="AGR" id="RGD:1359098"/>
<dbReference type="RGD" id="1359098">
    <property type="gene designation" value="Vom1r94"/>
</dbReference>
<dbReference type="VEuPathDB" id="HostDB:ENSRNOG00000031140"/>
<dbReference type="eggNOG" id="ENOG502SNRJ">
    <property type="taxonomic scope" value="Eukaryota"/>
</dbReference>
<dbReference type="HOGENOM" id="CLU_058641_0_0_1"/>
<dbReference type="InParanoid" id="Q5J3M4"/>
<dbReference type="OrthoDB" id="77513at9989"/>
<dbReference type="PhylomeDB" id="Q5J3M4"/>
<dbReference type="PRO" id="PR:Q5J3M4"/>
<dbReference type="Proteomes" id="UP000002494">
    <property type="component" value="Chromosome 4"/>
</dbReference>
<dbReference type="GO" id="GO:0005886">
    <property type="term" value="C:plasma membrane"/>
    <property type="evidence" value="ECO:0007669"/>
    <property type="project" value="UniProtKB-SubCell"/>
</dbReference>
<dbReference type="GO" id="GO:0016503">
    <property type="term" value="F:pheromone receptor activity"/>
    <property type="evidence" value="ECO:0007669"/>
    <property type="project" value="InterPro"/>
</dbReference>
<dbReference type="GO" id="GO:0019236">
    <property type="term" value="P:response to pheromone"/>
    <property type="evidence" value="ECO:0007669"/>
    <property type="project" value="UniProtKB-KW"/>
</dbReference>
<dbReference type="GO" id="GO:0007606">
    <property type="term" value="P:sensory perception of chemical stimulus"/>
    <property type="evidence" value="ECO:0007669"/>
    <property type="project" value="UniProtKB-ARBA"/>
</dbReference>
<dbReference type="CDD" id="cd13949">
    <property type="entry name" value="7tm_V1R_pheromone"/>
    <property type="match status" value="1"/>
</dbReference>
<dbReference type="FunFam" id="1.20.1070.10:FF:000051">
    <property type="entry name" value="Vomeronasal type-1 receptor"/>
    <property type="match status" value="1"/>
</dbReference>
<dbReference type="Gene3D" id="1.20.1070.10">
    <property type="entry name" value="Rhodopsin 7-helix transmembrane proteins"/>
    <property type="match status" value="1"/>
</dbReference>
<dbReference type="InterPro" id="IPR017452">
    <property type="entry name" value="GPCR_Rhodpsn_7TM"/>
</dbReference>
<dbReference type="InterPro" id="IPR004072">
    <property type="entry name" value="Vmron_rcpt_1"/>
</dbReference>
<dbReference type="PANTHER" id="PTHR24062">
    <property type="entry name" value="VOMERONASAL TYPE-1 RECEPTOR"/>
    <property type="match status" value="1"/>
</dbReference>
<dbReference type="Pfam" id="PF03402">
    <property type="entry name" value="V1R"/>
    <property type="match status" value="1"/>
</dbReference>
<dbReference type="PRINTS" id="PR01534">
    <property type="entry name" value="VOMERONASL1R"/>
</dbReference>
<dbReference type="SUPFAM" id="SSF81321">
    <property type="entry name" value="Family A G protein-coupled receptor-like"/>
    <property type="match status" value="1"/>
</dbReference>
<dbReference type="PROSITE" id="PS50262">
    <property type="entry name" value="G_PROTEIN_RECEP_F1_2"/>
    <property type="match status" value="1"/>
</dbReference>
<organism>
    <name type="scientific">Rattus norvegicus</name>
    <name type="common">Rat</name>
    <dbReference type="NCBI Taxonomy" id="10116"/>
    <lineage>
        <taxon>Eukaryota</taxon>
        <taxon>Metazoa</taxon>
        <taxon>Chordata</taxon>
        <taxon>Craniata</taxon>
        <taxon>Vertebrata</taxon>
        <taxon>Euteleostomi</taxon>
        <taxon>Mammalia</taxon>
        <taxon>Eutheria</taxon>
        <taxon>Euarchontoglires</taxon>
        <taxon>Glires</taxon>
        <taxon>Rodentia</taxon>
        <taxon>Myomorpha</taxon>
        <taxon>Muroidea</taxon>
        <taxon>Muridae</taxon>
        <taxon>Murinae</taxon>
        <taxon>Rattus</taxon>
    </lineage>
</organism>
<feature type="chain" id="PRO_0000239969" description="Vomeronasal type-1 receptor 94">
    <location>
        <begin position="1"/>
        <end position="326"/>
    </location>
</feature>
<feature type="topological domain" description="Extracellular" evidence="2">
    <location>
        <begin position="1"/>
        <end position="32"/>
    </location>
</feature>
<feature type="transmembrane region" description="Helical; Name=1" evidence="2">
    <location>
        <begin position="33"/>
        <end position="53"/>
    </location>
</feature>
<feature type="topological domain" description="Cytoplasmic" evidence="2">
    <location>
        <begin position="54"/>
        <end position="65"/>
    </location>
</feature>
<feature type="transmembrane region" description="Helical; Name=2" evidence="2">
    <location>
        <begin position="66"/>
        <end position="86"/>
    </location>
</feature>
<feature type="topological domain" description="Extracellular" evidence="2">
    <location>
        <begin position="87"/>
        <end position="110"/>
    </location>
</feature>
<feature type="transmembrane region" description="Helical; Name=3" evidence="2">
    <location>
        <begin position="111"/>
        <end position="130"/>
    </location>
</feature>
<feature type="topological domain" description="Cytoplasmic" evidence="2">
    <location>
        <begin position="131"/>
        <end position="150"/>
    </location>
</feature>
<feature type="transmembrane region" description="Helical; Name=4" evidence="2">
    <location>
        <begin position="151"/>
        <end position="171"/>
    </location>
</feature>
<feature type="topological domain" description="Extracellular" evidence="2">
    <location>
        <begin position="172"/>
        <end position="203"/>
    </location>
</feature>
<feature type="transmembrane region" description="Helical; Name=5" evidence="2">
    <location>
        <begin position="204"/>
        <end position="224"/>
    </location>
</feature>
<feature type="topological domain" description="Cytoplasmic" evidence="2">
    <location>
        <begin position="225"/>
        <end position="254"/>
    </location>
</feature>
<feature type="transmembrane region" description="Helical; Name=6" evidence="2">
    <location>
        <begin position="255"/>
        <end position="275"/>
    </location>
</feature>
<feature type="topological domain" description="Extracellular" evidence="2">
    <location>
        <begin position="276"/>
        <end position="285"/>
    </location>
</feature>
<feature type="transmembrane region" description="Helical; Name=7" evidence="2">
    <location>
        <begin position="286"/>
        <end position="306"/>
    </location>
</feature>
<feature type="topological domain" description="Cytoplasmic" evidence="2">
    <location>
        <begin position="307"/>
        <end position="326"/>
    </location>
</feature>
<feature type="glycosylation site" description="N-linked (GlcNAc...) asparagine" evidence="2">
    <location>
        <position position="175"/>
    </location>
</feature>
<feature type="disulfide bond" evidence="3">
    <location>
        <begin position="101"/>
        <end position="188"/>
    </location>
</feature>
<reference evidence="5" key="1">
    <citation type="submission" date="2003-12" db="EMBL/GenBank/DDBJ databases">
        <title>Rat vomeronasal receptors.</title>
        <authorList>
            <person name="Capello L."/>
            <person name="Rodriguez I."/>
        </authorList>
    </citation>
    <scope>NUCLEOTIDE SEQUENCE [MRNA]</scope>
</reference>
<proteinExistence type="evidence at transcript level"/>
<name>V1R94_RAT</name>
<accession>Q5J3M4</accession>
<comment type="function">
    <text evidence="1">Putative pheromone receptor implicated in the regulation of social as well as reproductive behavior.</text>
</comment>
<comment type="subcellular location">
    <subcellularLocation>
        <location evidence="4">Cell membrane</location>
        <topology evidence="2">Multi-pass membrane protein</topology>
    </subcellularLocation>
</comment>
<comment type="similarity">
    <text evidence="3">Belongs to the G-protein coupled receptor 1 family.</text>
</comment>
<gene>
    <name type="primary">Vom1r94</name>
    <name type="synonym">V1ra13</name>
</gene>
<evidence type="ECO:0000250" key="1">
    <source>
        <dbReference type="UniProtKB" id="Q8VIC6"/>
    </source>
</evidence>
<evidence type="ECO:0000255" key="2"/>
<evidence type="ECO:0000255" key="3">
    <source>
        <dbReference type="PROSITE-ProRule" id="PRU00521"/>
    </source>
</evidence>
<evidence type="ECO:0000305" key="4"/>
<evidence type="ECO:0000312" key="5">
    <source>
        <dbReference type="EMBL" id="AAR87953.1"/>
    </source>
</evidence>
<protein>
    <recommendedName>
        <fullName>Vomeronasal type-1 receptor 94</fullName>
    </recommendedName>
    <alternativeName>
        <fullName>Vomeronasal type-1 receptor A13</fullName>
    </alternativeName>
</protein>
<keyword id="KW-1003">Cell membrane</keyword>
<keyword id="KW-1015">Disulfide bond</keyword>
<keyword id="KW-0297">G-protein coupled receptor</keyword>
<keyword id="KW-0325">Glycoprotein</keyword>
<keyword id="KW-0472">Membrane</keyword>
<keyword id="KW-0589">Pheromone response</keyword>
<keyword id="KW-0675">Receptor</keyword>
<keyword id="KW-1185">Reference proteome</keyword>
<keyword id="KW-0807">Transducer</keyword>
<keyword id="KW-0812">Transmembrane</keyword>
<keyword id="KW-1133">Transmembrane helix</keyword>
<sequence>MSEILLFSPQPLFSYTMNKYSRLYTNSNIRNTFFSEIGIGIAANSLLLLFHIFKFIRGQRSRLTDLPIGLLSLIHLLKLLMIAFIATDIFISWRGWDDIICKFLVYLYRSFRGLSLCTTCMLSVLQAITLSPRSSCLAKFKHKSPHHVSCAILSLSVLYMFISSHLLVSLIATPNLTTNVFMYVSESCSILPMSYLMQSMFSTLLAIRDVFLISLMVLSTCYMVALLCRHRKQTRHLQGTSLSPKASPEKKATHSILMLMSFFVLMSILDSIVSCSRTMFLYDPTSYAIQIFVSHIYATVSPFVFMSNEKHIVNFLRSLCKRVINV</sequence>